<organism>
    <name type="scientific">Delftia acidovorans (strain DSM 14801 / SPH-1)</name>
    <dbReference type="NCBI Taxonomy" id="398578"/>
    <lineage>
        <taxon>Bacteria</taxon>
        <taxon>Pseudomonadati</taxon>
        <taxon>Pseudomonadota</taxon>
        <taxon>Betaproteobacteria</taxon>
        <taxon>Burkholderiales</taxon>
        <taxon>Comamonadaceae</taxon>
        <taxon>Delftia</taxon>
    </lineage>
</organism>
<gene>
    <name evidence="1" type="primary">xseA</name>
    <name type="ordered locus">Daci_3573</name>
</gene>
<name>EX7L_DELAS</name>
<keyword id="KW-0963">Cytoplasm</keyword>
<keyword id="KW-0269">Exonuclease</keyword>
<keyword id="KW-0378">Hydrolase</keyword>
<keyword id="KW-0540">Nuclease</keyword>
<keyword id="KW-1185">Reference proteome</keyword>
<dbReference type="EC" id="3.1.11.6" evidence="1"/>
<dbReference type="EMBL" id="CP000884">
    <property type="protein sequence ID" value="ABX36207.1"/>
    <property type="molecule type" value="Genomic_DNA"/>
</dbReference>
<dbReference type="RefSeq" id="WP_012205407.1">
    <property type="nucleotide sequence ID" value="NC_010002.1"/>
</dbReference>
<dbReference type="SMR" id="A9BWI7"/>
<dbReference type="STRING" id="398578.Daci_3573"/>
<dbReference type="GeneID" id="24114367"/>
<dbReference type="KEGG" id="dac:Daci_3573"/>
<dbReference type="eggNOG" id="COG1570">
    <property type="taxonomic scope" value="Bacteria"/>
</dbReference>
<dbReference type="HOGENOM" id="CLU_023625_3_1_4"/>
<dbReference type="Proteomes" id="UP000000784">
    <property type="component" value="Chromosome"/>
</dbReference>
<dbReference type="GO" id="GO:0005737">
    <property type="term" value="C:cytoplasm"/>
    <property type="evidence" value="ECO:0007669"/>
    <property type="project" value="UniProtKB-SubCell"/>
</dbReference>
<dbReference type="GO" id="GO:0009318">
    <property type="term" value="C:exodeoxyribonuclease VII complex"/>
    <property type="evidence" value="ECO:0007669"/>
    <property type="project" value="InterPro"/>
</dbReference>
<dbReference type="GO" id="GO:0008855">
    <property type="term" value="F:exodeoxyribonuclease VII activity"/>
    <property type="evidence" value="ECO:0007669"/>
    <property type="project" value="UniProtKB-UniRule"/>
</dbReference>
<dbReference type="GO" id="GO:0003676">
    <property type="term" value="F:nucleic acid binding"/>
    <property type="evidence" value="ECO:0007669"/>
    <property type="project" value="InterPro"/>
</dbReference>
<dbReference type="GO" id="GO:0006308">
    <property type="term" value="P:DNA catabolic process"/>
    <property type="evidence" value="ECO:0007669"/>
    <property type="project" value="UniProtKB-UniRule"/>
</dbReference>
<dbReference type="CDD" id="cd04489">
    <property type="entry name" value="ExoVII_LU_OBF"/>
    <property type="match status" value="1"/>
</dbReference>
<dbReference type="HAMAP" id="MF_00378">
    <property type="entry name" value="Exonuc_7_L"/>
    <property type="match status" value="1"/>
</dbReference>
<dbReference type="InterPro" id="IPR003753">
    <property type="entry name" value="Exonuc_VII_L"/>
</dbReference>
<dbReference type="InterPro" id="IPR020579">
    <property type="entry name" value="Exonuc_VII_lsu_C"/>
</dbReference>
<dbReference type="InterPro" id="IPR025824">
    <property type="entry name" value="OB-fold_nuc-bd_dom"/>
</dbReference>
<dbReference type="NCBIfam" id="TIGR00237">
    <property type="entry name" value="xseA"/>
    <property type="match status" value="1"/>
</dbReference>
<dbReference type="PANTHER" id="PTHR30008">
    <property type="entry name" value="EXODEOXYRIBONUCLEASE 7 LARGE SUBUNIT"/>
    <property type="match status" value="1"/>
</dbReference>
<dbReference type="PANTHER" id="PTHR30008:SF0">
    <property type="entry name" value="EXODEOXYRIBONUCLEASE 7 LARGE SUBUNIT"/>
    <property type="match status" value="1"/>
</dbReference>
<dbReference type="Pfam" id="PF02601">
    <property type="entry name" value="Exonuc_VII_L"/>
    <property type="match status" value="1"/>
</dbReference>
<dbReference type="Pfam" id="PF13742">
    <property type="entry name" value="tRNA_anti_2"/>
    <property type="match status" value="1"/>
</dbReference>
<comment type="function">
    <text evidence="1">Bidirectionally degrades single-stranded DNA into large acid-insoluble oligonucleotides, which are then degraded further into small acid-soluble oligonucleotides.</text>
</comment>
<comment type="catalytic activity">
    <reaction evidence="1">
        <text>Exonucleolytic cleavage in either 5'- to 3'- or 3'- to 5'-direction to yield nucleoside 5'-phosphates.</text>
        <dbReference type="EC" id="3.1.11.6"/>
    </reaction>
</comment>
<comment type="subunit">
    <text evidence="1">Heterooligomer composed of large and small subunits.</text>
</comment>
<comment type="subcellular location">
    <subcellularLocation>
        <location evidence="1">Cytoplasm</location>
    </subcellularLocation>
</comment>
<comment type="similarity">
    <text evidence="1">Belongs to the XseA family.</text>
</comment>
<evidence type="ECO:0000255" key="1">
    <source>
        <dbReference type="HAMAP-Rule" id="MF_00378"/>
    </source>
</evidence>
<feature type="chain" id="PRO_1000205670" description="Exodeoxyribonuclease 7 large subunit">
    <location>
        <begin position="1"/>
        <end position="445"/>
    </location>
</feature>
<reference key="1">
    <citation type="submission" date="2007-11" db="EMBL/GenBank/DDBJ databases">
        <title>Complete sequence of Delftia acidovorans DSM 14801 / SPH-1.</title>
        <authorList>
            <person name="Copeland A."/>
            <person name="Lucas S."/>
            <person name="Lapidus A."/>
            <person name="Barry K."/>
            <person name="Glavina del Rio T."/>
            <person name="Dalin E."/>
            <person name="Tice H."/>
            <person name="Pitluck S."/>
            <person name="Lowry S."/>
            <person name="Clum A."/>
            <person name="Schmutz J."/>
            <person name="Larimer F."/>
            <person name="Land M."/>
            <person name="Hauser L."/>
            <person name="Kyrpides N."/>
            <person name="Kim E."/>
            <person name="Schleheck D."/>
            <person name="Richardson P."/>
        </authorList>
    </citation>
    <scope>NUCLEOTIDE SEQUENCE [LARGE SCALE GENOMIC DNA]</scope>
    <source>
        <strain>DSM 14801 / SPH-1</strain>
    </source>
</reference>
<proteinExistence type="inferred from homology"/>
<sequence>MSGAFGAMNPAAAPLVWEVGALCRAVSDALQARFNPVAVRGEISGFSRAASGHCYFSIKDAGGQIRCAMFRRAAQLMDFSPRDGELVELRGRLGVYEQRGDLQLVVESMQRAGQGALFEQFLRLKARLEAEGLFDAARKRSLPPLPRGIGVVTSPGAAALHDVITALRRRVPHIPVVLVPALVQGVQAPASLIDALQRLYGLAREGAGSVDGSVAGAPPIDTILLVRGGGSIEDLWAFNDERLARTIVQSPVPLISGVGHETDFTIADFCADLRAPTPTAAAELVSQPREVWMGALQLMQGRLEDGVQRLLDRQQQRLDLAAQRLGRPSEQLARSRLQLSRQAQRLRHAMQLRLQRMDHAGQGLQAQLPAGMRRGLDRRADHLARMELRLQLLDPRLVLQRGYALLTDAEGHPVTEARSAPPGTALQAQLADGSLDLVVTQPRLL</sequence>
<protein>
    <recommendedName>
        <fullName evidence="1">Exodeoxyribonuclease 7 large subunit</fullName>
        <ecNumber evidence="1">3.1.11.6</ecNumber>
    </recommendedName>
    <alternativeName>
        <fullName evidence="1">Exodeoxyribonuclease VII large subunit</fullName>
        <shortName evidence="1">Exonuclease VII large subunit</shortName>
    </alternativeName>
</protein>
<accession>A9BWI7</accession>